<feature type="chain" id="PRO_0000203826" description="Phosphoenolpyruvate carboxykinase (ATP)">
    <location>
        <begin position="1"/>
        <end position="530"/>
    </location>
</feature>
<feature type="binding site" evidence="1">
    <location>
        <position position="57"/>
    </location>
    <ligand>
        <name>substrate</name>
    </ligand>
</feature>
<feature type="binding site" evidence="1">
    <location>
        <position position="193"/>
    </location>
    <ligand>
        <name>substrate</name>
    </ligand>
</feature>
<feature type="binding site" evidence="1">
    <location>
        <position position="199"/>
    </location>
    <ligand>
        <name>ATP</name>
        <dbReference type="ChEBI" id="CHEBI:30616"/>
    </ligand>
</feature>
<feature type="binding site" evidence="1">
    <location>
        <position position="199"/>
    </location>
    <ligand>
        <name>Mn(2+)</name>
        <dbReference type="ChEBI" id="CHEBI:29035"/>
    </ligand>
</feature>
<feature type="binding site" evidence="1">
    <location>
        <position position="199"/>
    </location>
    <ligand>
        <name>substrate</name>
    </ligand>
</feature>
<feature type="binding site" evidence="1">
    <location>
        <position position="218"/>
    </location>
    <ligand>
        <name>ATP</name>
        <dbReference type="ChEBI" id="CHEBI:30616"/>
    </ligand>
</feature>
<feature type="binding site" evidence="1">
    <location>
        <position position="218"/>
    </location>
    <ligand>
        <name>Mn(2+)</name>
        <dbReference type="ChEBI" id="CHEBI:29035"/>
    </ligand>
</feature>
<feature type="binding site" evidence="1">
    <location>
        <begin position="234"/>
        <end position="242"/>
    </location>
    <ligand>
        <name>ATP</name>
        <dbReference type="ChEBI" id="CHEBI:30616"/>
    </ligand>
</feature>
<feature type="binding site" evidence="1">
    <location>
        <position position="255"/>
    </location>
    <ligand>
        <name>Mn(2+)</name>
        <dbReference type="ChEBI" id="CHEBI:29035"/>
    </ligand>
</feature>
<feature type="binding site" evidence="1">
    <location>
        <position position="283"/>
    </location>
    <ligand>
        <name>ATP</name>
        <dbReference type="ChEBI" id="CHEBI:30616"/>
    </ligand>
</feature>
<feature type="binding site" evidence="1">
    <location>
        <position position="320"/>
    </location>
    <ligand>
        <name>ATP</name>
        <dbReference type="ChEBI" id="CHEBI:30616"/>
    </ligand>
</feature>
<feature type="binding site" evidence="1">
    <location>
        <position position="320"/>
    </location>
    <ligand>
        <name>substrate</name>
    </ligand>
</feature>
<feature type="binding site" evidence="1">
    <location>
        <position position="445"/>
    </location>
    <ligand>
        <name>ATP</name>
        <dbReference type="ChEBI" id="CHEBI:30616"/>
    </ligand>
</feature>
<proteinExistence type="inferred from homology"/>
<gene>
    <name evidence="1" type="primary">pckA</name>
    <name type="ordered locus">LA_0251</name>
</gene>
<sequence>MQAQTQVKGLKELGLEPSEIFHNLSYDEIYEHEKKNGETVVSSNGTMMVDTGIFTGRSPKDKYFVDEPSSNGNIWWSHINFKVSEAIFDELYKKCVNYLSHKKLYVFDGYAGANPETRVSLRVVSEKAWQHHFCTNMFLRPTKEELVGLDPEFTIINACGIKNENFKQHGMNSEVFVIFHLAKKICIIGGTEYGGEMKKGIFSVMNYKLPLQGILSMHCSANVGQDGDTALFFGLSGTGKTTLSTDPNRKLIGDDEHGWDDNGIFNIEGGCYAKVINLDPKTEPDIYEAIRKDALLENVVYDPQTKIVDYSSAAKTENTRVSYPIFHINNIQVPSKGGHPKTIIFLTYDAFGVLPPVSKLSIEQAMYHFLSGYTAKVAGTERGIKEPTATFSACFGAAFMTLHPTKYAKLLGEKMKKHNVRAYLMNTGLVGGSYGVGKRMNLPSTRKIIDEILNGNIEKSEFVTHPVFQVAYPKTISGVDSAILDPREAWTDKAAYDQTAKKLGEMFIKNFKQYAEGSKDFDFTAFGPKI</sequence>
<keyword id="KW-0067">ATP-binding</keyword>
<keyword id="KW-0963">Cytoplasm</keyword>
<keyword id="KW-0210">Decarboxylase</keyword>
<keyword id="KW-0312">Gluconeogenesis</keyword>
<keyword id="KW-0456">Lyase</keyword>
<keyword id="KW-0464">Manganese</keyword>
<keyword id="KW-0479">Metal-binding</keyword>
<keyword id="KW-0547">Nucleotide-binding</keyword>
<keyword id="KW-1185">Reference proteome</keyword>
<protein>
    <recommendedName>
        <fullName evidence="1">Phosphoenolpyruvate carboxykinase (ATP)</fullName>
        <shortName evidence="1">PCK</shortName>
        <shortName evidence="1">PEP carboxykinase</shortName>
        <shortName evidence="1">PEPCK</shortName>
        <ecNumber evidence="1">4.1.1.49</ecNumber>
    </recommendedName>
</protein>
<organism>
    <name type="scientific">Leptospira interrogans serogroup Icterohaemorrhagiae serovar Lai (strain 56601)</name>
    <dbReference type="NCBI Taxonomy" id="189518"/>
    <lineage>
        <taxon>Bacteria</taxon>
        <taxon>Pseudomonadati</taxon>
        <taxon>Spirochaetota</taxon>
        <taxon>Spirochaetia</taxon>
        <taxon>Leptospirales</taxon>
        <taxon>Leptospiraceae</taxon>
        <taxon>Leptospira</taxon>
    </lineage>
</organism>
<evidence type="ECO:0000255" key="1">
    <source>
        <dbReference type="HAMAP-Rule" id="MF_00453"/>
    </source>
</evidence>
<name>PCKA_LEPIN</name>
<reference key="1">
    <citation type="journal article" date="2003" name="Nature">
        <title>Unique physiological and pathogenic features of Leptospira interrogans revealed by whole-genome sequencing.</title>
        <authorList>
            <person name="Ren S.-X."/>
            <person name="Fu G."/>
            <person name="Jiang X.-G."/>
            <person name="Zeng R."/>
            <person name="Miao Y.-G."/>
            <person name="Xu H."/>
            <person name="Zhang Y.-X."/>
            <person name="Xiong H."/>
            <person name="Lu G."/>
            <person name="Lu L.-F."/>
            <person name="Jiang H.-Q."/>
            <person name="Jia J."/>
            <person name="Tu Y.-F."/>
            <person name="Jiang J.-X."/>
            <person name="Gu W.-Y."/>
            <person name="Zhang Y.-Q."/>
            <person name="Cai Z."/>
            <person name="Sheng H.-H."/>
            <person name="Yin H.-F."/>
            <person name="Zhang Y."/>
            <person name="Zhu G.-F."/>
            <person name="Wan M."/>
            <person name="Huang H.-L."/>
            <person name="Qian Z."/>
            <person name="Wang S.-Y."/>
            <person name="Ma W."/>
            <person name="Yao Z.-J."/>
            <person name="Shen Y."/>
            <person name="Qiang B.-Q."/>
            <person name="Xia Q.-C."/>
            <person name="Guo X.-K."/>
            <person name="Danchin A."/>
            <person name="Saint Girons I."/>
            <person name="Somerville R.L."/>
            <person name="Wen Y.-M."/>
            <person name="Shi M.-H."/>
            <person name="Chen Z."/>
            <person name="Xu J.-G."/>
            <person name="Zhao G.-P."/>
        </authorList>
    </citation>
    <scope>NUCLEOTIDE SEQUENCE [LARGE SCALE GENOMIC DNA]</scope>
    <source>
        <strain>56601</strain>
    </source>
</reference>
<comment type="function">
    <text evidence="1">Involved in the gluconeogenesis. Catalyzes the conversion of oxaloacetate (OAA) to phosphoenolpyruvate (PEP) through direct phosphoryl transfer between the nucleoside triphosphate and OAA.</text>
</comment>
<comment type="catalytic activity">
    <reaction evidence="1">
        <text>oxaloacetate + ATP = phosphoenolpyruvate + ADP + CO2</text>
        <dbReference type="Rhea" id="RHEA:18617"/>
        <dbReference type="ChEBI" id="CHEBI:16452"/>
        <dbReference type="ChEBI" id="CHEBI:16526"/>
        <dbReference type="ChEBI" id="CHEBI:30616"/>
        <dbReference type="ChEBI" id="CHEBI:58702"/>
        <dbReference type="ChEBI" id="CHEBI:456216"/>
        <dbReference type="EC" id="4.1.1.49"/>
    </reaction>
</comment>
<comment type="cofactor">
    <cofactor evidence="1">
        <name>Mn(2+)</name>
        <dbReference type="ChEBI" id="CHEBI:29035"/>
    </cofactor>
    <text evidence="1">Binds 1 Mn(2+) ion per subunit.</text>
</comment>
<comment type="pathway">
    <text evidence="1">Carbohydrate biosynthesis; gluconeogenesis.</text>
</comment>
<comment type="subcellular location">
    <subcellularLocation>
        <location evidence="1">Cytoplasm</location>
    </subcellularLocation>
</comment>
<comment type="similarity">
    <text evidence="1">Belongs to the phosphoenolpyruvate carboxykinase (ATP) family.</text>
</comment>
<accession>Q8F9E4</accession>
<dbReference type="EC" id="4.1.1.49" evidence="1"/>
<dbReference type="EMBL" id="AE010300">
    <property type="protein sequence ID" value="AAN47450.1"/>
    <property type="molecule type" value="Genomic_DNA"/>
</dbReference>
<dbReference type="RefSeq" id="NP_710432.1">
    <property type="nucleotide sequence ID" value="NC_004342.2"/>
</dbReference>
<dbReference type="RefSeq" id="WP_001148872.1">
    <property type="nucleotide sequence ID" value="NC_004342.2"/>
</dbReference>
<dbReference type="SMR" id="Q8F9E4"/>
<dbReference type="FunCoup" id="Q8F9E4">
    <property type="interactions" value="314"/>
</dbReference>
<dbReference type="STRING" id="189518.LA_0251"/>
<dbReference type="PaxDb" id="189518-LA_0251"/>
<dbReference type="EnsemblBacteria" id="AAN47450">
    <property type="protein sequence ID" value="AAN47450"/>
    <property type="gene ID" value="LA_0251"/>
</dbReference>
<dbReference type="GeneID" id="61143574"/>
<dbReference type="KEGG" id="lil:LA_0251"/>
<dbReference type="PATRIC" id="fig|189518.3.peg.252"/>
<dbReference type="HOGENOM" id="CLU_018247_0_1_12"/>
<dbReference type="InParanoid" id="Q8F9E4"/>
<dbReference type="OrthoDB" id="9806325at2"/>
<dbReference type="UniPathway" id="UPA00138"/>
<dbReference type="Proteomes" id="UP000001408">
    <property type="component" value="Chromosome I"/>
</dbReference>
<dbReference type="GO" id="GO:0005829">
    <property type="term" value="C:cytosol"/>
    <property type="evidence" value="ECO:0000318"/>
    <property type="project" value="GO_Central"/>
</dbReference>
<dbReference type="GO" id="GO:0005524">
    <property type="term" value="F:ATP binding"/>
    <property type="evidence" value="ECO:0007669"/>
    <property type="project" value="UniProtKB-UniRule"/>
</dbReference>
<dbReference type="GO" id="GO:0046872">
    <property type="term" value="F:metal ion binding"/>
    <property type="evidence" value="ECO:0007669"/>
    <property type="project" value="UniProtKB-KW"/>
</dbReference>
<dbReference type="GO" id="GO:0004612">
    <property type="term" value="F:phosphoenolpyruvate carboxykinase (ATP) activity"/>
    <property type="evidence" value="ECO:0000318"/>
    <property type="project" value="GO_Central"/>
</dbReference>
<dbReference type="GO" id="GO:0006094">
    <property type="term" value="P:gluconeogenesis"/>
    <property type="evidence" value="ECO:0000318"/>
    <property type="project" value="GO_Central"/>
</dbReference>
<dbReference type="CDD" id="cd00484">
    <property type="entry name" value="PEPCK_ATP"/>
    <property type="match status" value="1"/>
</dbReference>
<dbReference type="FunFam" id="2.170.8.10:FF:000001">
    <property type="entry name" value="Phosphoenolpyruvate carboxykinase (ATP)"/>
    <property type="match status" value="1"/>
</dbReference>
<dbReference type="FunFam" id="3.40.449.10:FF:000001">
    <property type="entry name" value="Phosphoenolpyruvate carboxykinase (ATP)"/>
    <property type="match status" value="1"/>
</dbReference>
<dbReference type="Gene3D" id="3.90.228.20">
    <property type="match status" value="1"/>
</dbReference>
<dbReference type="Gene3D" id="3.40.449.10">
    <property type="entry name" value="Phosphoenolpyruvate Carboxykinase, domain 1"/>
    <property type="match status" value="1"/>
</dbReference>
<dbReference type="Gene3D" id="2.170.8.10">
    <property type="entry name" value="Phosphoenolpyruvate Carboxykinase, domain 2"/>
    <property type="match status" value="1"/>
</dbReference>
<dbReference type="HAMAP" id="MF_00453">
    <property type="entry name" value="PEPCK_ATP"/>
    <property type="match status" value="1"/>
</dbReference>
<dbReference type="InterPro" id="IPR001272">
    <property type="entry name" value="PEP_carboxykinase_ATP"/>
</dbReference>
<dbReference type="InterPro" id="IPR013035">
    <property type="entry name" value="PEP_carboxykinase_C"/>
</dbReference>
<dbReference type="InterPro" id="IPR008210">
    <property type="entry name" value="PEP_carboxykinase_N"/>
</dbReference>
<dbReference type="InterPro" id="IPR015994">
    <property type="entry name" value="PEPCK_ATP_CS"/>
</dbReference>
<dbReference type="NCBIfam" id="TIGR00224">
    <property type="entry name" value="pckA"/>
    <property type="match status" value="1"/>
</dbReference>
<dbReference type="NCBIfam" id="NF006819">
    <property type="entry name" value="PRK09344.1-1"/>
    <property type="match status" value="1"/>
</dbReference>
<dbReference type="NCBIfam" id="NF006820">
    <property type="entry name" value="PRK09344.1-2"/>
    <property type="match status" value="1"/>
</dbReference>
<dbReference type="NCBIfam" id="NF006821">
    <property type="entry name" value="PRK09344.1-3"/>
    <property type="match status" value="1"/>
</dbReference>
<dbReference type="PANTHER" id="PTHR30031:SF0">
    <property type="entry name" value="PHOSPHOENOLPYRUVATE CARBOXYKINASE (ATP)"/>
    <property type="match status" value="1"/>
</dbReference>
<dbReference type="PANTHER" id="PTHR30031">
    <property type="entry name" value="PHOSPHOENOLPYRUVATE CARBOXYKINASE ATP"/>
    <property type="match status" value="1"/>
</dbReference>
<dbReference type="Pfam" id="PF01293">
    <property type="entry name" value="PEPCK_ATP"/>
    <property type="match status" value="1"/>
</dbReference>
<dbReference type="PIRSF" id="PIRSF006294">
    <property type="entry name" value="PEP_crbxkin"/>
    <property type="match status" value="1"/>
</dbReference>
<dbReference type="SUPFAM" id="SSF68923">
    <property type="entry name" value="PEP carboxykinase N-terminal domain"/>
    <property type="match status" value="1"/>
</dbReference>
<dbReference type="SUPFAM" id="SSF53795">
    <property type="entry name" value="PEP carboxykinase-like"/>
    <property type="match status" value="1"/>
</dbReference>
<dbReference type="PROSITE" id="PS00532">
    <property type="entry name" value="PEPCK_ATP"/>
    <property type="match status" value="1"/>
</dbReference>